<sequence>MNKEPMSMHGYNKICAELKQLKEVERPNIVKEIDIARGHGDLKENAEYHAAKEKQRFIEARIVDLSEIVANAQVIDPSVLAHNKVSFGSTIKILNLDNDKEFSYTIVGSVESDPAKGLISFGSPIAKSLIGKSKGDAVSIQLPNGESDFEILDIYYKEICFDEN</sequence>
<comment type="function">
    <text evidence="1">Necessary for efficient RNA polymerase transcription elongation past template-encoded arresting sites. The arresting sites in DNA have the property of trapping a certain fraction of elongating RNA polymerases that pass through, resulting in locked ternary complexes. Cleavage of the nascent transcript by cleavage factors such as GreA or GreB allows the resumption of elongation from the new 3'terminus. GreA releases sequences of 2 to 3 nucleotides.</text>
</comment>
<comment type="similarity">
    <text evidence="1">Belongs to the GreA/GreB family.</text>
</comment>
<organism>
    <name type="scientific">Helicobacter pylori (strain HPAG1)</name>
    <dbReference type="NCBI Taxonomy" id="357544"/>
    <lineage>
        <taxon>Bacteria</taxon>
        <taxon>Pseudomonadati</taxon>
        <taxon>Campylobacterota</taxon>
        <taxon>Epsilonproteobacteria</taxon>
        <taxon>Campylobacterales</taxon>
        <taxon>Helicobacteraceae</taxon>
        <taxon>Helicobacter</taxon>
    </lineage>
</organism>
<keyword id="KW-0238">DNA-binding</keyword>
<keyword id="KW-0804">Transcription</keyword>
<keyword id="KW-0805">Transcription regulation</keyword>
<proteinExistence type="inferred from homology"/>
<name>GREA_HELPH</name>
<gene>
    <name evidence="1" type="primary">greA</name>
    <name type="ordered locus">HPAG1_0849</name>
</gene>
<protein>
    <recommendedName>
        <fullName evidence="1">Transcription elongation factor GreA</fullName>
    </recommendedName>
    <alternativeName>
        <fullName evidence="1">Transcript cleavage factor GreA</fullName>
    </alternativeName>
</protein>
<evidence type="ECO:0000255" key="1">
    <source>
        <dbReference type="HAMAP-Rule" id="MF_00105"/>
    </source>
</evidence>
<feature type="chain" id="PRO_1000075873" description="Transcription elongation factor GreA">
    <location>
        <begin position="1"/>
        <end position="164"/>
    </location>
</feature>
<accession>Q1CT06</accession>
<dbReference type="EMBL" id="CP000241">
    <property type="protein sequence ID" value="ABF84916.1"/>
    <property type="molecule type" value="Genomic_DNA"/>
</dbReference>
<dbReference type="RefSeq" id="WP_001031343.1">
    <property type="nucleotide sequence ID" value="NC_008086.1"/>
</dbReference>
<dbReference type="SMR" id="Q1CT06"/>
<dbReference type="KEGG" id="hpa:HPAG1_0849"/>
<dbReference type="HOGENOM" id="CLU_101379_2_0_7"/>
<dbReference type="GO" id="GO:0003677">
    <property type="term" value="F:DNA binding"/>
    <property type="evidence" value="ECO:0007669"/>
    <property type="project" value="UniProtKB-UniRule"/>
</dbReference>
<dbReference type="GO" id="GO:0070063">
    <property type="term" value="F:RNA polymerase binding"/>
    <property type="evidence" value="ECO:0007669"/>
    <property type="project" value="InterPro"/>
</dbReference>
<dbReference type="GO" id="GO:0006354">
    <property type="term" value="P:DNA-templated transcription elongation"/>
    <property type="evidence" value="ECO:0007669"/>
    <property type="project" value="TreeGrafter"/>
</dbReference>
<dbReference type="GO" id="GO:0032784">
    <property type="term" value="P:regulation of DNA-templated transcription elongation"/>
    <property type="evidence" value="ECO:0007669"/>
    <property type="project" value="UniProtKB-UniRule"/>
</dbReference>
<dbReference type="FunFam" id="1.10.287.180:FF:000001">
    <property type="entry name" value="Transcription elongation factor GreA"/>
    <property type="match status" value="1"/>
</dbReference>
<dbReference type="FunFam" id="3.10.50.30:FF:000001">
    <property type="entry name" value="Transcription elongation factor GreA"/>
    <property type="match status" value="1"/>
</dbReference>
<dbReference type="Gene3D" id="3.10.50.30">
    <property type="entry name" value="Transcription elongation factor, GreA/GreB, C-terminal domain"/>
    <property type="match status" value="1"/>
</dbReference>
<dbReference type="Gene3D" id="1.10.287.180">
    <property type="entry name" value="Transcription elongation factor, GreA/GreB, N-terminal domain"/>
    <property type="match status" value="1"/>
</dbReference>
<dbReference type="HAMAP" id="MF_00105">
    <property type="entry name" value="GreA_GreB"/>
    <property type="match status" value="1"/>
</dbReference>
<dbReference type="InterPro" id="IPR036953">
    <property type="entry name" value="GreA/GreB_C_sf"/>
</dbReference>
<dbReference type="InterPro" id="IPR018151">
    <property type="entry name" value="TF_GreA/GreB_CS"/>
</dbReference>
<dbReference type="InterPro" id="IPR006359">
    <property type="entry name" value="Tscrpt_elong_fac_GreA"/>
</dbReference>
<dbReference type="InterPro" id="IPR028624">
    <property type="entry name" value="Tscrpt_elong_fac_GreA/B"/>
</dbReference>
<dbReference type="InterPro" id="IPR001437">
    <property type="entry name" value="Tscrpt_elong_fac_GreA/B_C"/>
</dbReference>
<dbReference type="InterPro" id="IPR023459">
    <property type="entry name" value="Tscrpt_elong_fac_GreA/B_fam"/>
</dbReference>
<dbReference type="InterPro" id="IPR022691">
    <property type="entry name" value="Tscrpt_elong_fac_GreA/B_N"/>
</dbReference>
<dbReference type="InterPro" id="IPR036805">
    <property type="entry name" value="Tscrpt_elong_fac_GreA/B_N_sf"/>
</dbReference>
<dbReference type="NCBIfam" id="TIGR01462">
    <property type="entry name" value="greA"/>
    <property type="match status" value="1"/>
</dbReference>
<dbReference type="NCBIfam" id="NF001261">
    <property type="entry name" value="PRK00226.1-2"/>
    <property type="match status" value="1"/>
</dbReference>
<dbReference type="NCBIfam" id="NF001263">
    <property type="entry name" value="PRK00226.1-4"/>
    <property type="match status" value="1"/>
</dbReference>
<dbReference type="NCBIfam" id="NF001264">
    <property type="entry name" value="PRK00226.1-5"/>
    <property type="match status" value="1"/>
</dbReference>
<dbReference type="PANTHER" id="PTHR30437">
    <property type="entry name" value="TRANSCRIPTION ELONGATION FACTOR GREA"/>
    <property type="match status" value="1"/>
</dbReference>
<dbReference type="PANTHER" id="PTHR30437:SF4">
    <property type="entry name" value="TRANSCRIPTION ELONGATION FACTOR GREA"/>
    <property type="match status" value="1"/>
</dbReference>
<dbReference type="Pfam" id="PF01272">
    <property type="entry name" value="GreA_GreB"/>
    <property type="match status" value="1"/>
</dbReference>
<dbReference type="Pfam" id="PF03449">
    <property type="entry name" value="GreA_GreB_N"/>
    <property type="match status" value="1"/>
</dbReference>
<dbReference type="PIRSF" id="PIRSF006092">
    <property type="entry name" value="GreA_GreB"/>
    <property type="match status" value="1"/>
</dbReference>
<dbReference type="SUPFAM" id="SSF54534">
    <property type="entry name" value="FKBP-like"/>
    <property type="match status" value="1"/>
</dbReference>
<dbReference type="SUPFAM" id="SSF46557">
    <property type="entry name" value="GreA transcript cleavage protein, N-terminal domain"/>
    <property type="match status" value="1"/>
</dbReference>
<dbReference type="PROSITE" id="PS00829">
    <property type="entry name" value="GREAB_1"/>
    <property type="match status" value="1"/>
</dbReference>
<dbReference type="PROSITE" id="PS00830">
    <property type="entry name" value="GREAB_2"/>
    <property type="match status" value="1"/>
</dbReference>
<reference key="1">
    <citation type="journal article" date="2006" name="Proc. Natl. Acad. Sci. U.S.A.">
        <title>The complete genome sequence of a chronic atrophic gastritis Helicobacter pylori strain: evolution during disease progression.</title>
        <authorList>
            <person name="Oh J.D."/>
            <person name="Kling-Baeckhed H."/>
            <person name="Giannakis M."/>
            <person name="Xu J."/>
            <person name="Fulton R.S."/>
            <person name="Fulton L.A."/>
            <person name="Cordum H.S."/>
            <person name="Wang C."/>
            <person name="Elliott G."/>
            <person name="Edwards J."/>
            <person name="Mardis E.R."/>
            <person name="Engstrand L.G."/>
            <person name="Gordon J.I."/>
        </authorList>
    </citation>
    <scope>NUCLEOTIDE SEQUENCE [LARGE SCALE GENOMIC DNA]</scope>
    <source>
        <strain>HPAG1</strain>
    </source>
</reference>